<sequence>MLIGVGTDIVQISRIEKILHLYPELFAKKILTSKELKQFALLGKINHAAFLAKRFAAKEAVSKAFGVGIGQGINFKDITILNNDLGKPIVEVSSNYTNKLSPFNIHLSLADDYPVCVAFAVIESSYNVIRG</sequence>
<protein>
    <recommendedName>
        <fullName evidence="1">Holo-[acyl-carrier-protein] synthase</fullName>
        <shortName evidence="1">Holo-ACP synthase</shortName>
        <ecNumber evidence="1">2.7.8.7</ecNumber>
    </recommendedName>
    <alternativeName>
        <fullName evidence="1">4'-phosphopantetheinyl transferase AcpS</fullName>
    </alternativeName>
</protein>
<keyword id="KW-0963">Cytoplasm</keyword>
<keyword id="KW-0275">Fatty acid biosynthesis</keyword>
<keyword id="KW-0276">Fatty acid metabolism</keyword>
<keyword id="KW-0444">Lipid biosynthesis</keyword>
<keyword id="KW-0443">Lipid metabolism</keyword>
<keyword id="KW-0460">Magnesium</keyword>
<keyword id="KW-0479">Metal-binding</keyword>
<keyword id="KW-0808">Transferase</keyword>
<feature type="chain" id="PRO_1000008486" description="Holo-[acyl-carrier-protein] synthase">
    <location>
        <begin position="1"/>
        <end position="131"/>
    </location>
</feature>
<feature type="binding site" evidence="1">
    <location>
        <position position="8"/>
    </location>
    <ligand>
        <name>Mg(2+)</name>
        <dbReference type="ChEBI" id="CHEBI:18420"/>
    </ligand>
</feature>
<feature type="binding site" evidence="1">
    <location>
        <position position="59"/>
    </location>
    <ligand>
        <name>Mg(2+)</name>
        <dbReference type="ChEBI" id="CHEBI:18420"/>
    </ligand>
</feature>
<name>ACPS_RICRS</name>
<evidence type="ECO:0000255" key="1">
    <source>
        <dbReference type="HAMAP-Rule" id="MF_00101"/>
    </source>
</evidence>
<accession>A8GSU8</accession>
<organism>
    <name type="scientific">Rickettsia rickettsii (strain Sheila Smith)</name>
    <dbReference type="NCBI Taxonomy" id="392021"/>
    <lineage>
        <taxon>Bacteria</taxon>
        <taxon>Pseudomonadati</taxon>
        <taxon>Pseudomonadota</taxon>
        <taxon>Alphaproteobacteria</taxon>
        <taxon>Rickettsiales</taxon>
        <taxon>Rickettsiaceae</taxon>
        <taxon>Rickettsieae</taxon>
        <taxon>Rickettsia</taxon>
        <taxon>spotted fever group</taxon>
    </lineage>
</organism>
<reference key="1">
    <citation type="submission" date="2007-09" db="EMBL/GenBank/DDBJ databases">
        <title>Complete genome sequence of Rickettsia rickettsii.</title>
        <authorList>
            <person name="Madan A."/>
            <person name="Fahey J."/>
            <person name="Helton E."/>
            <person name="Ketteman M."/>
            <person name="Madan A."/>
            <person name="Rodrigues S."/>
            <person name="Sanchez A."/>
            <person name="Dasch G."/>
            <person name="Eremeeva M."/>
        </authorList>
    </citation>
    <scope>NUCLEOTIDE SEQUENCE [LARGE SCALE GENOMIC DNA]</scope>
    <source>
        <strain>Sheila Smith</strain>
    </source>
</reference>
<gene>
    <name evidence="1" type="primary">acpS</name>
    <name type="ordered locus">A1G_04865</name>
</gene>
<dbReference type="EC" id="2.7.8.7" evidence="1"/>
<dbReference type="EMBL" id="CP000848">
    <property type="protein sequence ID" value="ABV76473.1"/>
    <property type="molecule type" value="Genomic_DNA"/>
</dbReference>
<dbReference type="RefSeq" id="WP_012151044.1">
    <property type="nucleotide sequence ID" value="NZ_CP121767.1"/>
</dbReference>
<dbReference type="SMR" id="A8GSU8"/>
<dbReference type="GeneID" id="79937564"/>
<dbReference type="KEGG" id="rri:A1G_04865"/>
<dbReference type="HOGENOM" id="CLU_089696_1_2_5"/>
<dbReference type="Proteomes" id="UP000006832">
    <property type="component" value="Chromosome"/>
</dbReference>
<dbReference type="GO" id="GO:0005737">
    <property type="term" value="C:cytoplasm"/>
    <property type="evidence" value="ECO:0007669"/>
    <property type="project" value="UniProtKB-SubCell"/>
</dbReference>
<dbReference type="GO" id="GO:0008897">
    <property type="term" value="F:holo-[acyl-carrier-protein] synthase activity"/>
    <property type="evidence" value="ECO:0007669"/>
    <property type="project" value="UniProtKB-UniRule"/>
</dbReference>
<dbReference type="GO" id="GO:0000287">
    <property type="term" value="F:magnesium ion binding"/>
    <property type="evidence" value="ECO:0007669"/>
    <property type="project" value="UniProtKB-UniRule"/>
</dbReference>
<dbReference type="GO" id="GO:0006633">
    <property type="term" value="P:fatty acid biosynthetic process"/>
    <property type="evidence" value="ECO:0007669"/>
    <property type="project" value="UniProtKB-UniRule"/>
</dbReference>
<dbReference type="Gene3D" id="3.90.470.20">
    <property type="entry name" value="4'-phosphopantetheinyl transferase domain"/>
    <property type="match status" value="1"/>
</dbReference>
<dbReference type="HAMAP" id="MF_00101">
    <property type="entry name" value="AcpS"/>
    <property type="match status" value="1"/>
</dbReference>
<dbReference type="InterPro" id="IPR008278">
    <property type="entry name" value="4-PPantetheinyl_Trfase_dom"/>
</dbReference>
<dbReference type="InterPro" id="IPR037143">
    <property type="entry name" value="4-PPantetheinyl_Trfase_dom_sf"/>
</dbReference>
<dbReference type="InterPro" id="IPR002582">
    <property type="entry name" value="ACPS"/>
</dbReference>
<dbReference type="InterPro" id="IPR004568">
    <property type="entry name" value="Ppantetheine-prot_Trfase_dom"/>
</dbReference>
<dbReference type="NCBIfam" id="TIGR00516">
    <property type="entry name" value="acpS"/>
    <property type="match status" value="1"/>
</dbReference>
<dbReference type="NCBIfam" id="TIGR00556">
    <property type="entry name" value="pantethn_trn"/>
    <property type="match status" value="1"/>
</dbReference>
<dbReference type="Pfam" id="PF01648">
    <property type="entry name" value="ACPS"/>
    <property type="match status" value="1"/>
</dbReference>
<dbReference type="SUPFAM" id="SSF56214">
    <property type="entry name" value="4'-phosphopantetheinyl transferase"/>
    <property type="match status" value="1"/>
</dbReference>
<proteinExistence type="inferred from homology"/>
<comment type="function">
    <text evidence="1">Transfers the 4'-phosphopantetheine moiety from coenzyme A to a Ser of acyl-carrier-protein.</text>
</comment>
<comment type="catalytic activity">
    <reaction evidence="1">
        <text>apo-[ACP] + CoA = holo-[ACP] + adenosine 3',5'-bisphosphate + H(+)</text>
        <dbReference type="Rhea" id="RHEA:12068"/>
        <dbReference type="Rhea" id="RHEA-COMP:9685"/>
        <dbReference type="Rhea" id="RHEA-COMP:9690"/>
        <dbReference type="ChEBI" id="CHEBI:15378"/>
        <dbReference type="ChEBI" id="CHEBI:29999"/>
        <dbReference type="ChEBI" id="CHEBI:57287"/>
        <dbReference type="ChEBI" id="CHEBI:58343"/>
        <dbReference type="ChEBI" id="CHEBI:64479"/>
        <dbReference type="EC" id="2.7.8.7"/>
    </reaction>
</comment>
<comment type="cofactor">
    <cofactor evidence="1">
        <name>Mg(2+)</name>
        <dbReference type="ChEBI" id="CHEBI:18420"/>
    </cofactor>
</comment>
<comment type="subcellular location">
    <subcellularLocation>
        <location evidence="1">Cytoplasm</location>
    </subcellularLocation>
</comment>
<comment type="similarity">
    <text evidence="1">Belongs to the P-Pant transferase superfamily. AcpS family.</text>
</comment>